<comment type="subcellular location">
    <subcellularLocation>
        <location evidence="2">Cell membrane</location>
        <topology evidence="2">Multi-pass membrane protein</topology>
    </subcellularLocation>
</comment>
<protein>
    <recommendedName>
        <fullName>Uncharacterized protein HI_1595</fullName>
    </recommendedName>
</protein>
<dbReference type="EMBL" id="L42023">
    <property type="protein sequence ID" value="AAC23246.1"/>
    <property type="molecule type" value="Genomic_DNA"/>
</dbReference>
<dbReference type="PIR" id="F64037">
    <property type="entry name" value="F64037"/>
</dbReference>
<dbReference type="STRING" id="71421.HI_1595"/>
<dbReference type="EnsemblBacteria" id="AAC23246">
    <property type="protein sequence ID" value="AAC23246"/>
    <property type="gene ID" value="HI_1595"/>
</dbReference>
<dbReference type="KEGG" id="hin:HI_1595"/>
<dbReference type="eggNOG" id="COG1674">
    <property type="taxonomic scope" value="Bacteria"/>
</dbReference>
<dbReference type="HOGENOM" id="CLU_2206335_0_0_6"/>
<dbReference type="Proteomes" id="UP000000579">
    <property type="component" value="Chromosome"/>
</dbReference>
<dbReference type="GO" id="GO:0005886">
    <property type="term" value="C:plasma membrane"/>
    <property type="evidence" value="ECO:0007669"/>
    <property type="project" value="UniProtKB-SubCell"/>
</dbReference>
<dbReference type="InterPro" id="IPR025199">
    <property type="entry name" value="FtsK_4TM"/>
</dbReference>
<dbReference type="Pfam" id="PF13491">
    <property type="entry name" value="FtsK_4TM"/>
    <property type="match status" value="1"/>
</dbReference>
<keyword id="KW-1003">Cell membrane</keyword>
<keyword id="KW-0472">Membrane</keyword>
<keyword id="KW-1185">Reference proteome</keyword>
<keyword id="KW-0812">Transmembrane</keyword>
<keyword id="KW-1133">Transmembrane helix</keyword>
<evidence type="ECO:0000255" key="1"/>
<evidence type="ECO:0000305" key="2"/>
<sequence length="107" mass="12171">MIKQITERFTPRQYLAEFLLGLTALFGLYLIVAWSSYTPLDNSWATVSAYGNTINKVGSFGAWIIDLFFVFLGYVAHIIPFTAFLVPIYLLKTKAVKQLSCTRIILR</sequence>
<accession>P44266</accession>
<gene>
    <name type="ordered locus">HI_1595</name>
</gene>
<reference key="1">
    <citation type="journal article" date="1995" name="Science">
        <title>Whole-genome random sequencing and assembly of Haemophilus influenzae Rd.</title>
        <authorList>
            <person name="Fleischmann R.D."/>
            <person name="Adams M.D."/>
            <person name="White O."/>
            <person name="Clayton R.A."/>
            <person name="Kirkness E.F."/>
            <person name="Kerlavage A.R."/>
            <person name="Bult C.J."/>
            <person name="Tomb J.-F."/>
            <person name="Dougherty B.A."/>
            <person name="Merrick J.M."/>
            <person name="McKenney K."/>
            <person name="Sutton G.G."/>
            <person name="FitzHugh W."/>
            <person name="Fields C.A."/>
            <person name="Gocayne J.D."/>
            <person name="Scott J.D."/>
            <person name="Shirley R."/>
            <person name="Liu L.-I."/>
            <person name="Glodek A."/>
            <person name="Kelley J.M."/>
            <person name="Weidman J.F."/>
            <person name="Phillips C.A."/>
            <person name="Spriggs T."/>
            <person name="Hedblom E."/>
            <person name="Cotton M.D."/>
            <person name="Utterback T.R."/>
            <person name="Hanna M.C."/>
            <person name="Nguyen D.T."/>
            <person name="Saudek D.M."/>
            <person name="Brandon R.C."/>
            <person name="Fine L.D."/>
            <person name="Fritchman J.L."/>
            <person name="Fuhrmann J.L."/>
            <person name="Geoghagen N.S.M."/>
            <person name="Gnehm C.L."/>
            <person name="McDonald L.A."/>
            <person name="Small K.V."/>
            <person name="Fraser C.M."/>
            <person name="Smith H.O."/>
            <person name="Venter J.C."/>
        </authorList>
    </citation>
    <scope>NUCLEOTIDE SEQUENCE [LARGE SCALE GENOMIC DNA]</scope>
    <source>
        <strain>ATCC 51907 / DSM 11121 / KW20 / Rd</strain>
    </source>
</reference>
<proteinExistence type="predicted"/>
<name>Y1595_HAEIN</name>
<organism>
    <name type="scientific">Haemophilus influenzae (strain ATCC 51907 / DSM 11121 / KW20 / Rd)</name>
    <dbReference type="NCBI Taxonomy" id="71421"/>
    <lineage>
        <taxon>Bacteria</taxon>
        <taxon>Pseudomonadati</taxon>
        <taxon>Pseudomonadota</taxon>
        <taxon>Gammaproteobacteria</taxon>
        <taxon>Pasteurellales</taxon>
        <taxon>Pasteurellaceae</taxon>
        <taxon>Haemophilus</taxon>
    </lineage>
</organism>
<feature type="chain" id="PRO_0000078096" description="Uncharacterized protein HI_1595">
    <location>
        <begin position="1"/>
        <end position="107"/>
    </location>
</feature>
<feature type="transmembrane region" description="Helical" evidence="1">
    <location>
        <begin position="14"/>
        <end position="34"/>
    </location>
</feature>
<feature type="transmembrane region" description="Helical" evidence="1">
    <location>
        <begin position="68"/>
        <end position="88"/>
    </location>
</feature>